<gene>
    <name type="primary">MYB1</name>
</gene>
<feature type="chain" id="PRO_0000197067" description="Myb-related protein Hv1">
    <location>
        <begin position="1"/>
        <end position="267"/>
    </location>
</feature>
<feature type="domain" description="HTH myb-type 1" evidence="1">
    <location>
        <begin position="9"/>
        <end position="61"/>
    </location>
</feature>
<feature type="domain" description="HTH myb-type 2" evidence="1">
    <location>
        <begin position="62"/>
        <end position="116"/>
    </location>
</feature>
<feature type="DNA-binding region" description="H-T-H motif" evidence="1">
    <location>
        <begin position="37"/>
        <end position="61"/>
    </location>
</feature>
<feature type="DNA-binding region" description="H-T-H motif" evidence="1">
    <location>
        <begin position="89"/>
        <end position="112"/>
    </location>
</feature>
<protein>
    <recommendedName>
        <fullName>Myb-related protein Hv1</fullName>
    </recommendedName>
</protein>
<sequence>MGRSPCCEKAHTNKGAWTKEEDDRLTAYIKAHGEGCWRSLPKAAGLLRCGKSCRLRWINYLRPDLKRGNFSHEEDELIIKLHSLLGNKWSLIAGRLPGRTDNEIKNYWNTHIRRKLTSRGIDPVTHRAINSDHAASNITISFESAQRDDKGAVFRRDAEPAKAAAAAAAISHHVDHHHRSNPQLDWGQGKPLKCPDLNLDLCISPPIHEDPMVDTKPVVKREAGVGVGVVGLCFSCSMGLPRSSDCKCSSFMGLRTAMLDFRSIEMK</sequence>
<dbReference type="EMBL" id="X70877">
    <property type="protein sequence ID" value="CAA50222.1"/>
    <property type="molecule type" value="mRNA"/>
</dbReference>
<dbReference type="EMBL" id="X70879">
    <property type="protein sequence ID" value="CAA50224.1"/>
    <property type="molecule type" value="Genomic_DNA"/>
</dbReference>
<dbReference type="PIR" id="S61506">
    <property type="entry name" value="S61506"/>
</dbReference>
<dbReference type="SMR" id="P20026"/>
<dbReference type="ExpressionAtlas" id="P20026">
    <property type="expression patterns" value="baseline and differential"/>
</dbReference>
<dbReference type="GO" id="GO:0005634">
    <property type="term" value="C:nucleus"/>
    <property type="evidence" value="ECO:0007669"/>
    <property type="project" value="UniProtKB-SubCell"/>
</dbReference>
<dbReference type="GO" id="GO:0003677">
    <property type="term" value="F:DNA binding"/>
    <property type="evidence" value="ECO:0007669"/>
    <property type="project" value="UniProtKB-KW"/>
</dbReference>
<dbReference type="CDD" id="cd00167">
    <property type="entry name" value="SANT"/>
    <property type="match status" value="2"/>
</dbReference>
<dbReference type="FunFam" id="1.10.10.60:FF:000121">
    <property type="entry name" value="Myb transcription factor"/>
    <property type="match status" value="1"/>
</dbReference>
<dbReference type="FunFam" id="1.10.10.60:FF:000157">
    <property type="entry name" value="Myb transcription factor"/>
    <property type="match status" value="1"/>
</dbReference>
<dbReference type="Gene3D" id="1.10.10.60">
    <property type="entry name" value="Homeodomain-like"/>
    <property type="match status" value="2"/>
</dbReference>
<dbReference type="InterPro" id="IPR009057">
    <property type="entry name" value="Homeodomain-like_sf"/>
</dbReference>
<dbReference type="InterPro" id="IPR017930">
    <property type="entry name" value="Myb_dom"/>
</dbReference>
<dbReference type="InterPro" id="IPR015495">
    <property type="entry name" value="Myb_TF_plants"/>
</dbReference>
<dbReference type="InterPro" id="IPR001005">
    <property type="entry name" value="SANT/Myb"/>
</dbReference>
<dbReference type="PANTHER" id="PTHR47999">
    <property type="entry name" value="TRANSCRIPTION FACTOR MYB8-RELATED-RELATED"/>
    <property type="match status" value="1"/>
</dbReference>
<dbReference type="PANTHER" id="PTHR47999:SF23">
    <property type="entry name" value="TRANSCRIPTION REPRESSOR MYB4"/>
    <property type="match status" value="1"/>
</dbReference>
<dbReference type="Pfam" id="PF00249">
    <property type="entry name" value="Myb_DNA-binding"/>
    <property type="match status" value="2"/>
</dbReference>
<dbReference type="SMART" id="SM00717">
    <property type="entry name" value="SANT"/>
    <property type="match status" value="2"/>
</dbReference>
<dbReference type="SUPFAM" id="SSF46689">
    <property type="entry name" value="Homeodomain-like"/>
    <property type="match status" value="1"/>
</dbReference>
<dbReference type="PROSITE" id="PS51294">
    <property type="entry name" value="HTH_MYB"/>
    <property type="match status" value="2"/>
</dbReference>
<organism>
    <name type="scientific">Hordeum vulgare</name>
    <name type="common">Barley</name>
    <dbReference type="NCBI Taxonomy" id="4513"/>
    <lineage>
        <taxon>Eukaryota</taxon>
        <taxon>Viridiplantae</taxon>
        <taxon>Streptophyta</taxon>
        <taxon>Embryophyta</taxon>
        <taxon>Tracheophyta</taxon>
        <taxon>Spermatophyta</taxon>
        <taxon>Magnoliopsida</taxon>
        <taxon>Liliopsida</taxon>
        <taxon>Poales</taxon>
        <taxon>Poaceae</taxon>
        <taxon>BOP clade</taxon>
        <taxon>Pooideae</taxon>
        <taxon>Triticodae</taxon>
        <taxon>Triticeae</taxon>
        <taxon>Hordeinae</taxon>
        <taxon>Hordeum</taxon>
    </lineage>
</organism>
<comment type="function">
    <text>Possible transcription activator in response to an external signal. May be involved in the regulation of flavonoid biosynthesis.</text>
</comment>
<comment type="subcellular location">
    <subcellularLocation>
        <location evidence="2">Nucleus</location>
    </subcellularLocation>
</comment>
<comment type="tissue specificity">
    <text>Germinating seed and apical meristem of shoot and root.</text>
</comment>
<accession>P20026</accession>
<evidence type="ECO:0000255" key="1">
    <source>
        <dbReference type="PROSITE-ProRule" id="PRU00625"/>
    </source>
</evidence>
<evidence type="ECO:0000305" key="2"/>
<name>MYB1_HORVU</name>
<proteinExistence type="evidence at transcript level"/>
<reference key="1">
    <citation type="journal article" date="1989" name="Mol. Gen. Genet.">
        <title>Multiple genes are transcribed in Hordeum vulgare and Zea mays that carry the DNA binding domain of the myb oncoproteins.</title>
        <authorList>
            <person name="Marocco A."/>
            <person name="Wissenbach M."/>
            <person name="Becker D."/>
            <person name="Paz-Ares J."/>
            <person name="Saedler H."/>
            <person name="Salamini F."/>
            <person name="Rohde W."/>
        </authorList>
    </citation>
    <scope>NUCLEOTIDE SEQUENCE</scope>
    <source>
        <strain>cv. Abyssinian 2231</strain>
    </source>
</reference>
<reference key="2">
    <citation type="journal article" date="1993" name="Plant J.">
        <title>Myb genes from Hordeum vulgare: tissue-specific expression of chimeric Myb promoter/Gus genes in transgenic tobacco.</title>
        <authorList>
            <person name="Wissenbach M."/>
            <person name="Ueberlacker B."/>
            <person name="Vogt F."/>
            <person name="Becker D."/>
            <person name="Salamini F."/>
            <person name="Rohde W."/>
        </authorList>
    </citation>
    <scope>NUCLEOTIDE SEQUENCE [GENOMIC DNA / MRNA]</scope>
    <source>
        <strain>cv. Abyssinian 2231</strain>
        <tissue>Leaf</tissue>
    </source>
</reference>
<keyword id="KW-0010">Activator</keyword>
<keyword id="KW-0238">DNA-binding</keyword>
<keyword id="KW-0539">Nucleus</keyword>
<keyword id="KW-0677">Repeat</keyword>
<keyword id="KW-0804">Transcription</keyword>
<keyword id="KW-0805">Transcription regulation</keyword>